<keyword id="KW-0167">Capsid protein</keyword>
<keyword id="KW-1139">Helical capsid protein</keyword>
<keyword id="KW-1048">Host nucleus</keyword>
<keyword id="KW-0945">Host-virus interaction</keyword>
<keyword id="KW-0687">Ribonucleoprotein</keyword>
<keyword id="KW-0694">RNA-binding</keyword>
<keyword id="KW-0543">Viral nucleoprotein</keyword>
<keyword id="KW-1163">Viral penetration into host nucleus</keyword>
<keyword id="KW-0946">Virion</keyword>
<keyword id="KW-1160">Virus entry into host cell</keyword>
<organismHost>
    <name type="scientific">Aves</name>
    <dbReference type="NCBI Taxonomy" id="8782"/>
</organismHost>
<organismHost>
    <name type="scientific">Homo sapiens</name>
    <name type="common">Human</name>
    <dbReference type="NCBI Taxonomy" id="9606"/>
</organismHost>
<organismHost>
    <name type="scientific">Sus scrofa</name>
    <name type="common">Pig</name>
    <dbReference type="NCBI Taxonomy" id="9823"/>
</organismHost>
<name>NCAP_I47A0</name>
<dbReference type="EMBL" id="M63750">
    <property type="protein sequence ID" value="AAA52249.1"/>
    <property type="molecule type" value="Genomic_RNA"/>
</dbReference>
<dbReference type="EMBL" id="AJ238021">
    <property type="protein sequence ID" value="CAB50887.1"/>
    <property type="molecule type" value="Genomic_RNA"/>
</dbReference>
<dbReference type="SMR" id="P26070"/>
<dbReference type="GO" id="GO:0019029">
    <property type="term" value="C:helical viral capsid"/>
    <property type="evidence" value="ECO:0007669"/>
    <property type="project" value="UniProtKB-UniRule"/>
</dbReference>
<dbReference type="GO" id="GO:0043657">
    <property type="term" value="C:host cell"/>
    <property type="evidence" value="ECO:0007669"/>
    <property type="project" value="GOC"/>
</dbReference>
<dbReference type="GO" id="GO:0042025">
    <property type="term" value="C:host cell nucleus"/>
    <property type="evidence" value="ECO:0007669"/>
    <property type="project" value="UniProtKB-SubCell"/>
</dbReference>
<dbReference type="GO" id="GO:1990904">
    <property type="term" value="C:ribonucleoprotein complex"/>
    <property type="evidence" value="ECO:0007669"/>
    <property type="project" value="UniProtKB-KW"/>
</dbReference>
<dbReference type="GO" id="GO:0019013">
    <property type="term" value="C:viral nucleocapsid"/>
    <property type="evidence" value="ECO:0007669"/>
    <property type="project" value="UniProtKB-UniRule"/>
</dbReference>
<dbReference type="GO" id="GO:0003723">
    <property type="term" value="F:RNA binding"/>
    <property type="evidence" value="ECO:0007669"/>
    <property type="project" value="UniProtKB-UniRule"/>
</dbReference>
<dbReference type="GO" id="GO:0005198">
    <property type="term" value="F:structural molecule activity"/>
    <property type="evidence" value="ECO:0007669"/>
    <property type="project" value="UniProtKB-UniRule"/>
</dbReference>
<dbReference type="GO" id="GO:0046718">
    <property type="term" value="P:symbiont entry into host cell"/>
    <property type="evidence" value="ECO:0007669"/>
    <property type="project" value="UniProtKB-KW"/>
</dbReference>
<dbReference type="GO" id="GO:0075732">
    <property type="term" value="P:viral penetration into host nucleus"/>
    <property type="evidence" value="ECO:0007669"/>
    <property type="project" value="UniProtKB-UniRule"/>
</dbReference>
<dbReference type="HAMAP" id="MF_04070">
    <property type="entry name" value="INFV_NCAP"/>
    <property type="match status" value="1"/>
</dbReference>
<dbReference type="InterPro" id="IPR002141">
    <property type="entry name" value="Flu_NP"/>
</dbReference>
<dbReference type="Pfam" id="PF00506">
    <property type="entry name" value="Flu_NP"/>
    <property type="match status" value="1"/>
</dbReference>
<dbReference type="SUPFAM" id="SSF161003">
    <property type="entry name" value="flu NP-like"/>
    <property type="match status" value="1"/>
</dbReference>
<evidence type="ECO:0000255" key="1">
    <source>
        <dbReference type="HAMAP-Rule" id="MF_04070"/>
    </source>
</evidence>
<evidence type="ECO:0000256" key="2">
    <source>
        <dbReference type="SAM" id="MobiDB-lite"/>
    </source>
</evidence>
<sequence length="498" mass="56184">MASQGTKRSYEQMETDGERQNATEIRASVGKMVGGIGRFYIQMCTELKLSDYEGRLIQNSLTIERMVLSAFDERRNKYLEEHPSAGKDPKKTGGPIYKRVDGKWMRELILYDKEEIRRIWRQANNGDDATAGLTHIMIWHSNLNDTTYQRTRALVRTGMDPRMCSLMQGSTLPRRSGAAGAAVKGVGTMVMELIRMIKRGINDRNFWRGENGRKTRIAYERMCNILKGKFQTAAQRAMMDQVRESRNPGNAEIEDLIFLARSALILRGSVAHKSCLPACVYGPAVASGYDFEREGYSLVGIDPFKLLQNSHVYSLIRPNENPAHKSQLVWMACNSAAFEDLRLSSFIRGTKVVPRGRLSTRGIQIASNENMDTMESSTLELRSRYWAIRTRSGGNTNQQRASAGQISIQPTFSVQRNLPFDKTTIMAAFTGNAEGRTSDMRAEIIRMMENARPEEVSFQGRGVFELSDERAANPIVPSFDMSNEGSYFFGDNAEEYDN</sequence>
<accession>P26070</accession>
<accession>Q77AL5</accession>
<reference key="1">
    <citation type="journal article" date="1991" name="J. Virol.">
        <title>Evolution of influenza A virus nucleoprotein genes: implications for the origins of H1N1 human and classical swine viruses.</title>
        <authorList>
            <person name="Gorman O.T."/>
            <person name="Bean W.J."/>
            <person name="Kawaoka Y."/>
            <person name="Donatelli I."/>
            <person name="Guo Y."/>
            <person name="Webster R.G."/>
        </authorList>
    </citation>
    <scope>NUCLEOTIDE SEQUENCE [GENOMIC RNA]</scope>
</reference>
<reference key="2">
    <citation type="journal article" date="1994" name="J. Virol.">
        <title>The influenza virus variant A/FM/1/47-MA possesses single amino acid replacements in the hemagglutinin, controlling virulence, and in the matrix protein, controlling virulence as well as growth.</title>
        <authorList>
            <person name="Smeenk C.A."/>
            <person name="Brown E.G."/>
        </authorList>
    </citation>
    <scope>NUCLEOTIDE SEQUENCE [GENOMIC RNA]</scope>
    <source>
        <strain>A/Fort Monmouth/1/1947-MA</strain>
    </source>
</reference>
<organism>
    <name type="scientific">Influenza A virus (strain A/Fort Monmouth/1/1947 H1N1)</name>
    <dbReference type="NCBI Taxonomy" id="380282"/>
    <lineage>
        <taxon>Viruses</taxon>
        <taxon>Riboviria</taxon>
        <taxon>Orthornavirae</taxon>
        <taxon>Negarnaviricota</taxon>
        <taxon>Polyploviricotina</taxon>
        <taxon>Insthoviricetes</taxon>
        <taxon>Articulavirales</taxon>
        <taxon>Orthomyxoviridae</taxon>
        <taxon>Alphainfluenzavirus</taxon>
        <taxon>Alphainfluenzavirus influenzae</taxon>
        <taxon>Influenza A virus</taxon>
    </lineage>
</organism>
<proteinExistence type="inferred from homology"/>
<gene>
    <name evidence="1" type="primary">NP</name>
</gene>
<comment type="function">
    <text evidence="1">Encapsidates the negative strand viral RNA, protecting it from nucleases. The encapsidated genomic RNA is termed the ribonucleoprotein (RNP) and serves as template for transcription and replication. The RNP needs to be localized in the host nucleus to start an infectious cycle, but is too large to diffuse through the nuclear pore complex. NP comprises at least 2 nuclear localization signals that are responsible for the active RNP import into the nucleus through cellular importin alpha/beta pathway. Later in the infection, nclear export of RNPs are mediated through viral proteins NEP interacting with M1 which binds nucleoproteins. It is possible that nucleoprotein binds directly host exportin-1/XPO1 and plays an active role in RNPs nuclear export. M1 interaction with RNP seems to hide nucleoprotein's nuclear localization signals. Soon after a virion infects a new cell, M1 dissociates from the RNP under acidification of the virion driven by M2 protein. Dissociation of M1 from RNP unmasks nucleoprotein's nuclear localization signals, targeting the RNP to the nucleus.</text>
</comment>
<comment type="subunit">
    <text evidence="1">Homomultimerizes to form the nucleocapsid. May bind host exportin-1/XPO1. Binds to viral genomic RNA. Protein-RNA contacts are mediated by a combination of electrostatic interactions between positively charged residues and the phosphate backbone and planar interactions between aromatic side chains and bases.</text>
</comment>
<comment type="subcellular location">
    <subcellularLocation>
        <location evidence="1">Virion</location>
    </subcellularLocation>
    <subcellularLocation>
        <location evidence="1">Host nucleus</location>
    </subcellularLocation>
</comment>
<comment type="PTM">
    <text evidence="1">Late in virus-infected cells, may be cleaved from a 56-kDa protein to a 53-kDa protein by a cellular caspase. This cleavage might be a marker for the onset of apoptosis in infected cells or have a specific function in virus host interaction.</text>
</comment>
<comment type="similarity">
    <text evidence="1">Belongs to the influenza viruses nucleoprotein family.</text>
</comment>
<protein>
    <recommendedName>
        <fullName evidence="1">Nucleoprotein</fullName>
    </recommendedName>
    <alternativeName>
        <fullName evidence="1">Nucleocapsid protein</fullName>
        <shortName evidence="1">Protein N</shortName>
    </alternativeName>
</protein>
<feature type="chain" id="PRO_0000079044" description="Nucleoprotein">
    <location>
        <begin position="1"/>
        <end position="498"/>
    </location>
</feature>
<feature type="region of interest" description="Disordered" evidence="2">
    <location>
        <begin position="1"/>
        <end position="21"/>
    </location>
</feature>
<feature type="short sequence motif" description="Unconventional nuclear localization signal" evidence="1">
    <location>
        <begin position="1"/>
        <end position="18"/>
    </location>
</feature>
<feature type="short sequence motif" description="Bipartite nuclear localization signal" evidence="1">
    <location>
        <begin position="198"/>
        <end position="216"/>
    </location>
</feature>
<feature type="compositionally biased region" description="Basic and acidic residues" evidence="2">
    <location>
        <begin position="8"/>
        <end position="21"/>
    </location>
</feature>
<feature type="sequence variant" description="In strain: A/Fort Monmouth/1/1947-MA.">
    <original>D</original>
    <variation>N</variation>
    <location>
        <position position="101"/>
    </location>
</feature>
<feature type="sequence variant" description="In strain: A/Fort Monmouth/1/1947-MA.">
    <original>D</original>
    <variation>N</variation>
    <location>
        <position position="290"/>
    </location>
</feature>
<feature type="sequence variant" description="In strain: A/Fort Monmouth/1/1947-MA.">
    <original>H</original>
    <variation>Q</variation>
    <location>
        <position position="311"/>
    </location>
</feature>
<feature type="sequence variant" description="In strain: A/Fort Monmouth/1/1947-MA.">
    <original>R</original>
    <variation>E</variation>
    <location>
        <position position="391"/>
    </location>
</feature>
<feature type="sequence variant" description="In strain: A/Fort Monmouth/1/1947-MA.">
    <original>EY</original>
    <variation>VT</variation>
    <location>
        <begin position="495"/>
        <end position="496"/>
    </location>
</feature>